<proteinExistence type="inferred from homology"/>
<feature type="chain" id="PRO_0000171299" description="tRNA (guanine-N(7)-)-methyltransferase">
    <location>
        <begin position="1"/>
        <end position="209"/>
    </location>
</feature>
<feature type="active site" evidence="1">
    <location>
        <position position="114"/>
    </location>
</feature>
<feature type="binding site" evidence="2">
    <location>
        <position position="40"/>
    </location>
    <ligand>
        <name>S-adenosyl-L-methionine</name>
        <dbReference type="ChEBI" id="CHEBI:59789"/>
    </ligand>
</feature>
<feature type="binding site" evidence="2">
    <location>
        <position position="65"/>
    </location>
    <ligand>
        <name>S-adenosyl-L-methionine</name>
        <dbReference type="ChEBI" id="CHEBI:59789"/>
    </ligand>
</feature>
<feature type="binding site" evidence="2">
    <location>
        <position position="114"/>
    </location>
    <ligand>
        <name>S-adenosyl-L-methionine</name>
        <dbReference type="ChEBI" id="CHEBI:59789"/>
    </ligand>
</feature>
<feature type="binding site" evidence="2">
    <location>
        <position position="150"/>
    </location>
    <ligand>
        <name>substrate</name>
    </ligand>
</feature>
<feature type="binding site" evidence="2">
    <location>
        <begin position="188"/>
        <end position="191"/>
    </location>
    <ligand>
        <name>substrate</name>
    </ligand>
</feature>
<keyword id="KW-0489">Methyltransferase</keyword>
<keyword id="KW-1185">Reference proteome</keyword>
<keyword id="KW-0949">S-adenosyl-L-methionine</keyword>
<keyword id="KW-0808">Transferase</keyword>
<keyword id="KW-0819">tRNA processing</keyword>
<sequence>MALNGEYAHVAFDELRAPLNKGKWRSDVFKADAAMPLDVEVGTGNGTYFAHHAKTHSDRLLVGLELKYKPLIQSIRRAVNAGCKNAAITRFHAFNIDHLFAEGEIDNVYIHFPDPWTSPKKPKNRFVCKENLELLFRLQKPGSFINFKTDSLVYFLWAMDEIRQSPYKIIFETQDLHNSDMKDQNFETAFEKIFLREGIKINFVRLQKI</sequence>
<comment type="function">
    <text evidence="2">Catalyzes the formation of N(7)-methylguanine at position 46 (m7G46) in tRNA.</text>
</comment>
<comment type="catalytic activity">
    <reaction evidence="2">
        <text>guanosine(46) in tRNA + S-adenosyl-L-methionine = N(7)-methylguanosine(46) in tRNA + S-adenosyl-L-homocysteine</text>
        <dbReference type="Rhea" id="RHEA:42708"/>
        <dbReference type="Rhea" id="RHEA-COMP:10188"/>
        <dbReference type="Rhea" id="RHEA-COMP:10189"/>
        <dbReference type="ChEBI" id="CHEBI:57856"/>
        <dbReference type="ChEBI" id="CHEBI:59789"/>
        <dbReference type="ChEBI" id="CHEBI:74269"/>
        <dbReference type="ChEBI" id="CHEBI:74480"/>
        <dbReference type="EC" id="2.1.1.33"/>
    </reaction>
</comment>
<comment type="pathway">
    <text evidence="2">tRNA modification; N(7)-methylguanine-tRNA biosynthesis.</text>
</comment>
<comment type="similarity">
    <text evidence="2">Belongs to the class I-like SAM-binding methyltransferase superfamily. TrmB family.</text>
</comment>
<dbReference type="EC" id="2.1.1.33" evidence="2"/>
<dbReference type="EMBL" id="BX842646">
    <property type="protein sequence ID" value="CAE78018.1"/>
    <property type="molecule type" value="Genomic_DNA"/>
</dbReference>
<dbReference type="SMR" id="Q6MQU0"/>
<dbReference type="STRING" id="264462.Bd0370"/>
<dbReference type="KEGG" id="bba:Bd0370"/>
<dbReference type="eggNOG" id="COG0220">
    <property type="taxonomic scope" value="Bacteria"/>
</dbReference>
<dbReference type="HOGENOM" id="CLU_050910_2_2_7"/>
<dbReference type="UniPathway" id="UPA00989"/>
<dbReference type="Proteomes" id="UP000008080">
    <property type="component" value="Chromosome"/>
</dbReference>
<dbReference type="GO" id="GO:0043527">
    <property type="term" value="C:tRNA methyltransferase complex"/>
    <property type="evidence" value="ECO:0007669"/>
    <property type="project" value="TreeGrafter"/>
</dbReference>
<dbReference type="GO" id="GO:0008176">
    <property type="term" value="F:tRNA (guanine(46)-N7)-methyltransferase activity"/>
    <property type="evidence" value="ECO:0007669"/>
    <property type="project" value="UniProtKB-UniRule"/>
</dbReference>
<dbReference type="Gene3D" id="3.40.50.150">
    <property type="entry name" value="Vaccinia Virus protein VP39"/>
    <property type="match status" value="1"/>
</dbReference>
<dbReference type="HAMAP" id="MF_01057">
    <property type="entry name" value="tRNA_methyltr_TrmB"/>
    <property type="match status" value="1"/>
</dbReference>
<dbReference type="InterPro" id="IPR029063">
    <property type="entry name" value="SAM-dependent_MTases_sf"/>
</dbReference>
<dbReference type="InterPro" id="IPR003358">
    <property type="entry name" value="tRNA_(Gua-N-7)_MeTrfase_Trmb"/>
</dbReference>
<dbReference type="InterPro" id="IPR055361">
    <property type="entry name" value="tRNA_methyltr_TrmB_bact"/>
</dbReference>
<dbReference type="NCBIfam" id="NF001080">
    <property type="entry name" value="PRK00121.2-2"/>
    <property type="match status" value="1"/>
</dbReference>
<dbReference type="PANTHER" id="PTHR23417">
    <property type="entry name" value="3-DEOXY-D-MANNO-OCTULOSONIC-ACID TRANSFERASE/TRNA GUANINE-N 7 - -METHYLTRANSFERASE"/>
    <property type="match status" value="1"/>
</dbReference>
<dbReference type="PANTHER" id="PTHR23417:SF14">
    <property type="entry name" value="PENTACOTRIPEPTIDE-REPEAT REGION OF PRORP DOMAIN-CONTAINING PROTEIN"/>
    <property type="match status" value="1"/>
</dbReference>
<dbReference type="Pfam" id="PF02390">
    <property type="entry name" value="Methyltransf_4"/>
    <property type="match status" value="1"/>
</dbReference>
<dbReference type="SUPFAM" id="SSF53335">
    <property type="entry name" value="S-adenosyl-L-methionine-dependent methyltransferases"/>
    <property type="match status" value="1"/>
</dbReference>
<dbReference type="PROSITE" id="PS51625">
    <property type="entry name" value="SAM_MT_TRMB"/>
    <property type="match status" value="1"/>
</dbReference>
<protein>
    <recommendedName>
        <fullName evidence="2">tRNA (guanine-N(7)-)-methyltransferase</fullName>
        <ecNumber evidence="2">2.1.1.33</ecNumber>
    </recommendedName>
    <alternativeName>
        <fullName evidence="2">tRNA (guanine(46)-N(7))-methyltransferase</fullName>
    </alternativeName>
    <alternativeName>
        <fullName evidence="2">tRNA(m7G46)-methyltransferase</fullName>
    </alternativeName>
</protein>
<name>TRMB_BDEBA</name>
<organism>
    <name type="scientific">Bdellovibrio bacteriovorus (strain ATCC 15356 / DSM 50701 / NCIMB 9529 / HD100)</name>
    <dbReference type="NCBI Taxonomy" id="264462"/>
    <lineage>
        <taxon>Bacteria</taxon>
        <taxon>Pseudomonadati</taxon>
        <taxon>Bdellovibrionota</taxon>
        <taxon>Bdellovibrionia</taxon>
        <taxon>Bdellovibrionales</taxon>
        <taxon>Pseudobdellovibrionaceae</taxon>
        <taxon>Bdellovibrio</taxon>
    </lineage>
</organism>
<accession>Q6MQU0</accession>
<gene>
    <name evidence="2" type="primary">trmB</name>
    <name type="ordered locus">Bd0370</name>
</gene>
<reference key="1">
    <citation type="journal article" date="2004" name="Science">
        <title>A predator unmasked: life cycle of Bdellovibrio bacteriovorus from a genomic perspective.</title>
        <authorList>
            <person name="Rendulic S."/>
            <person name="Jagtap P."/>
            <person name="Rosinus A."/>
            <person name="Eppinger M."/>
            <person name="Baar C."/>
            <person name="Lanz C."/>
            <person name="Keller H."/>
            <person name="Lambert C."/>
            <person name="Evans K.J."/>
            <person name="Goesmann A."/>
            <person name="Meyer F."/>
            <person name="Sockett R.E."/>
            <person name="Schuster S.C."/>
        </authorList>
    </citation>
    <scope>NUCLEOTIDE SEQUENCE [LARGE SCALE GENOMIC DNA]</scope>
    <source>
        <strain>ATCC 15356 / DSM 50701 / NCIMB 9529 / HD100</strain>
    </source>
</reference>
<evidence type="ECO:0000250" key="1"/>
<evidence type="ECO:0000255" key="2">
    <source>
        <dbReference type="HAMAP-Rule" id="MF_01057"/>
    </source>
</evidence>